<sequence length="559" mass="58691">MRSDTIKSGFEKAPHRSLLKATGAIRSSSDYRKPFIGICNSYNELIPGHTHLQELGRIAKEAVREAGGVPFEFNTIGVCDGIAMGHIGMRYSLASRELIADSVETVAEAHRLDGLVCIPNCDKITPGMMMAALRINIPVIFVSGGPMKAGHTPEGKTVDLISVFEAVGQCSNGSITEGELQNIEEHACPGCGSCSGMFTANSMNCLSEALGFALPGNGTIVAEDPRRLELVKAASRRIVDLVENNVRPRDILTRQALLNAFALDFAMGGSTNTILHTLAIANEAGLSFDFSELNALSAKTPYICQVSPATMAVHIEDVDRAGGISAILKELSSIDGLLDLSAITVTGKTLGENIANAEVLDRSVIRSISDPYSATGGLAVLYGNLAPQGAVVKTGAVSPQMMQHSGPAKVYNAQDDAIKGIMEGDVKAGDVVVIRYEGPKGGPGMPEMLSPTSAIMGRGLGDSVALITDGRFSGGSRGACIGHVSPEAAERGPIAALQNGDIITIDIPARTMSVALSESTIKERLAQLPPFEPKIKRGYLARYAQLVTSANTGAILGHL</sequence>
<dbReference type="EC" id="4.2.1.9" evidence="1"/>
<dbReference type="EMBL" id="CP000108">
    <property type="protein sequence ID" value="ABB29156.1"/>
    <property type="molecule type" value="Genomic_DNA"/>
</dbReference>
<dbReference type="SMR" id="Q3APB9"/>
<dbReference type="STRING" id="340177.Cag_1906"/>
<dbReference type="KEGG" id="cch:Cag_1906"/>
<dbReference type="eggNOG" id="COG0129">
    <property type="taxonomic scope" value="Bacteria"/>
</dbReference>
<dbReference type="HOGENOM" id="CLU_014271_4_2_10"/>
<dbReference type="OrthoDB" id="9807077at2"/>
<dbReference type="UniPathway" id="UPA00047">
    <property type="reaction ID" value="UER00057"/>
</dbReference>
<dbReference type="UniPathway" id="UPA00049">
    <property type="reaction ID" value="UER00061"/>
</dbReference>
<dbReference type="GO" id="GO:0005829">
    <property type="term" value="C:cytosol"/>
    <property type="evidence" value="ECO:0007669"/>
    <property type="project" value="TreeGrafter"/>
</dbReference>
<dbReference type="GO" id="GO:0051537">
    <property type="term" value="F:2 iron, 2 sulfur cluster binding"/>
    <property type="evidence" value="ECO:0007669"/>
    <property type="project" value="UniProtKB-UniRule"/>
</dbReference>
<dbReference type="GO" id="GO:0004160">
    <property type="term" value="F:dihydroxy-acid dehydratase activity"/>
    <property type="evidence" value="ECO:0007669"/>
    <property type="project" value="UniProtKB-UniRule"/>
</dbReference>
<dbReference type="GO" id="GO:0000287">
    <property type="term" value="F:magnesium ion binding"/>
    <property type="evidence" value="ECO:0007669"/>
    <property type="project" value="UniProtKB-UniRule"/>
</dbReference>
<dbReference type="GO" id="GO:0009097">
    <property type="term" value="P:isoleucine biosynthetic process"/>
    <property type="evidence" value="ECO:0007669"/>
    <property type="project" value="UniProtKB-UniRule"/>
</dbReference>
<dbReference type="GO" id="GO:0009099">
    <property type="term" value="P:L-valine biosynthetic process"/>
    <property type="evidence" value="ECO:0007669"/>
    <property type="project" value="UniProtKB-UniRule"/>
</dbReference>
<dbReference type="FunFam" id="3.50.30.80:FF:000001">
    <property type="entry name" value="Dihydroxy-acid dehydratase"/>
    <property type="match status" value="1"/>
</dbReference>
<dbReference type="Gene3D" id="3.50.30.80">
    <property type="entry name" value="IlvD/EDD C-terminal domain-like"/>
    <property type="match status" value="1"/>
</dbReference>
<dbReference type="HAMAP" id="MF_00012">
    <property type="entry name" value="IlvD"/>
    <property type="match status" value="1"/>
</dbReference>
<dbReference type="InterPro" id="IPR042096">
    <property type="entry name" value="Dihydro-acid_dehy_C"/>
</dbReference>
<dbReference type="InterPro" id="IPR004404">
    <property type="entry name" value="DihydroxyA_deHydtase"/>
</dbReference>
<dbReference type="InterPro" id="IPR020558">
    <property type="entry name" value="DiOHA_6PGluconate_deHydtase_CS"/>
</dbReference>
<dbReference type="InterPro" id="IPR056740">
    <property type="entry name" value="ILV_EDD_C"/>
</dbReference>
<dbReference type="InterPro" id="IPR000581">
    <property type="entry name" value="ILV_EDD_N"/>
</dbReference>
<dbReference type="InterPro" id="IPR037237">
    <property type="entry name" value="IlvD/EDD_N"/>
</dbReference>
<dbReference type="NCBIfam" id="TIGR00110">
    <property type="entry name" value="ilvD"/>
    <property type="match status" value="1"/>
</dbReference>
<dbReference type="NCBIfam" id="NF002068">
    <property type="entry name" value="PRK00911.1"/>
    <property type="match status" value="1"/>
</dbReference>
<dbReference type="PANTHER" id="PTHR43661">
    <property type="entry name" value="D-XYLONATE DEHYDRATASE"/>
    <property type="match status" value="1"/>
</dbReference>
<dbReference type="PANTHER" id="PTHR43661:SF3">
    <property type="entry name" value="D-XYLONATE DEHYDRATASE YAGF-RELATED"/>
    <property type="match status" value="1"/>
</dbReference>
<dbReference type="Pfam" id="PF24877">
    <property type="entry name" value="ILV_EDD_C"/>
    <property type="match status" value="1"/>
</dbReference>
<dbReference type="Pfam" id="PF00920">
    <property type="entry name" value="ILVD_EDD_N"/>
    <property type="match status" value="1"/>
</dbReference>
<dbReference type="SUPFAM" id="SSF143975">
    <property type="entry name" value="IlvD/EDD N-terminal domain-like"/>
    <property type="match status" value="1"/>
</dbReference>
<dbReference type="SUPFAM" id="SSF52016">
    <property type="entry name" value="LeuD/IlvD-like"/>
    <property type="match status" value="1"/>
</dbReference>
<dbReference type="PROSITE" id="PS00886">
    <property type="entry name" value="ILVD_EDD_1"/>
    <property type="match status" value="1"/>
</dbReference>
<dbReference type="PROSITE" id="PS00887">
    <property type="entry name" value="ILVD_EDD_2"/>
    <property type="match status" value="1"/>
</dbReference>
<accession>Q3APB9</accession>
<comment type="function">
    <text evidence="1">Functions in the biosynthesis of branched-chain amino acids. Catalyzes the dehydration of (2R,3R)-2,3-dihydroxy-3-methylpentanoate (2,3-dihydroxy-3-methylvalerate) into 2-oxo-3-methylpentanoate (2-oxo-3-methylvalerate) and of (2R)-2,3-dihydroxy-3-methylbutanoate (2,3-dihydroxyisovalerate) into 2-oxo-3-methylbutanoate (2-oxoisovalerate), the penultimate precursor to L-isoleucine and L-valine, respectively.</text>
</comment>
<comment type="catalytic activity">
    <reaction evidence="1">
        <text>(2R)-2,3-dihydroxy-3-methylbutanoate = 3-methyl-2-oxobutanoate + H2O</text>
        <dbReference type="Rhea" id="RHEA:24809"/>
        <dbReference type="ChEBI" id="CHEBI:11851"/>
        <dbReference type="ChEBI" id="CHEBI:15377"/>
        <dbReference type="ChEBI" id="CHEBI:49072"/>
        <dbReference type="EC" id="4.2.1.9"/>
    </reaction>
    <physiologicalReaction direction="left-to-right" evidence="1">
        <dbReference type="Rhea" id="RHEA:24810"/>
    </physiologicalReaction>
</comment>
<comment type="catalytic activity">
    <reaction evidence="1">
        <text>(2R,3R)-2,3-dihydroxy-3-methylpentanoate = (S)-3-methyl-2-oxopentanoate + H2O</text>
        <dbReference type="Rhea" id="RHEA:27694"/>
        <dbReference type="ChEBI" id="CHEBI:15377"/>
        <dbReference type="ChEBI" id="CHEBI:35146"/>
        <dbReference type="ChEBI" id="CHEBI:49258"/>
        <dbReference type="EC" id="4.2.1.9"/>
    </reaction>
    <physiologicalReaction direction="left-to-right" evidence="1">
        <dbReference type="Rhea" id="RHEA:27695"/>
    </physiologicalReaction>
</comment>
<comment type="cofactor">
    <cofactor evidence="1">
        <name>[2Fe-2S] cluster</name>
        <dbReference type="ChEBI" id="CHEBI:190135"/>
    </cofactor>
    <text evidence="1">Binds 1 [2Fe-2S] cluster per subunit. This cluster acts as a Lewis acid cofactor.</text>
</comment>
<comment type="cofactor">
    <cofactor evidence="1">
        <name>Mg(2+)</name>
        <dbReference type="ChEBI" id="CHEBI:18420"/>
    </cofactor>
</comment>
<comment type="pathway">
    <text evidence="1">Amino-acid biosynthesis; L-isoleucine biosynthesis; L-isoleucine from 2-oxobutanoate: step 3/4.</text>
</comment>
<comment type="pathway">
    <text evidence="1">Amino-acid biosynthesis; L-valine biosynthesis; L-valine from pyruvate: step 3/4.</text>
</comment>
<comment type="subunit">
    <text evidence="1">Homodimer.</text>
</comment>
<comment type="similarity">
    <text evidence="1">Belongs to the IlvD/Edd family.</text>
</comment>
<reference key="1">
    <citation type="submission" date="2005-08" db="EMBL/GenBank/DDBJ databases">
        <title>Complete sequence of Chlorobium chlorochromatii CaD3.</title>
        <authorList>
            <consortium name="US DOE Joint Genome Institute"/>
            <person name="Copeland A."/>
            <person name="Lucas S."/>
            <person name="Lapidus A."/>
            <person name="Barry K."/>
            <person name="Detter J.C."/>
            <person name="Glavina T."/>
            <person name="Hammon N."/>
            <person name="Israni S."/>
            <person name="Pitluck S."/>
            <person name="Bryant D."/>
            <person name="Schmutz J."/>
            <person name="Larimer F."/>
            <person name="Land M."/>
            <person name="Kyrpides N."/>
            <person name="Ivanova N."/>
            <person name="Richardson P."/>
        </authorList>
    </citation>
    <scope>NUCLEOTIDE SEQUENCE [LARGE SCALE GENOMIC DNA]</scope>
    <source>
        <strain>CaD3</strain>
    </source>
</reference>
<protein>
    <recommendedName>
        <fullName evidence="1">Dihydroxy-acid dehydratase</fullName>
        <shortName evidence="1">DAD</shortName>
        <ecNumber evidence="1">4.2.1.9</ecNumber>
    </recommendedName>
</protein>
<evidence type="ECO:0000255" key="1">
    <source>
        <dbReference type="HAMAP-Rule" id="MF_00012"/>
    </source>
</evidence>
<gene>
    <name evidence="1" type="primary">ilvD</name>
    <name type="ordered locus">Cag_1906</name>
</gene>
<keyword id="KW-0001">2Fe-2S</keyword>
<keyword id="KW-0028">Amino-acid biosynthesis</keyword>
<keyword id="KW-0100">Branched-chain amino acid biosynthesis</keyword>
<keyword id="KW-0408">Iron</keyword>
<keyword id="KW-0411">Iron-sulfur</keyword>
<keyword id="KW-0456">Lyase</keyword>
<keyword id="KW-0460">Magnesium</keyword>
<keyword id="KW-0479">Metal-binding</keyword>
<name>ILVD_CHLCH</name>
<proteinExistence type="inferred from homology"/>
<feature type="chain" id="PRO_0000225382" description="Dihydroxy-acid dehydratase">
    <location>
        <begin position="1"/>
        <end position="559"/>
    </location>
</feature>
<feature type="active site" description="Proton acceptor" evidence="1">
    <location>
        <position position="473"/>
    </location>
</feature>
<feature type="binding site" evidence="1">
    <location>
        <position position="80"/>
    </location>
    <ligand>
        <name>Mg(2+)</name>
        <dbReference type="ChEBI" id="CHEBI:18420"/>
    </ligand>
</feature>
<feature type="binding site" evidence="1">
    <location>
        <position position="121"/>
    </location>
    <ligand>
        <name>[2Fe-2S] cluster</name>
        <dbReference type="ChEBI" id="CHEBI:190135"/>
    </ligand>
</feature>
<feature type="binding site" evidence="1">
    <location>
        <position position="122"/>
    </location>
    <ligand>
        <name>Mg(2+)</name>
        <dbReference type="ChEBI" id="CHEBI:18420"/>
    </ligand>
</feature>
<feature type="binding site" description="via carbamate group" evidence="1">
    <location>
        <position position="123"/>
    </location>
    <ligand>
        <name>Mg(2+)</name>
        <dbReference type="ChEBI" id="CHEBI:18420"/>
    </ligand>
</feature>
<feature type="binding site" evidence="1">
    <location>
        <position position="194"/>
    </location>
    <ligand>
        <name>[2Fe-2S] cluster</name>
        <dbReference type="ChEBI" id="CHEBI:190135"/>
    </ligand>
</feature>
<feature type="binding site" evidence="1">
    <location>
        <position position="447"/>
    </location>
    <ligand>
        <name>Mg(2+)</name>
        <dbReference type="ChEBI" id="CHEBI:18420"/>
    </ligand>
</feature>
<feature type="modified residue" description="N6-carboxylysine" evidence="1">
    <location>
        <position position="123"/>
    </location>
</feature>
<organism>
    <name type="scientific">Chlorobium chlorochromatii (strain CaD3)</name>
    <dbReference type="NCBI Taxonomy" id="340177"/>
    <lineage>
        <taxon>Bacteria</taxon>
        <taxon>Pseudomonadati</taxon>
        <taxon>Chlorobiota</taxon>
        <taxon>Chlorobiia</taxon>
        <taxon>Chlorobiales</taxon>
        <taxon>Chlorobiaceae</taxon>
        <taxon>Chlorobium/Pelodictyon group</taxon>
        <taxon>Chlorobium</taxon>
    </lineage>
</organism>